<proteinExistence type="inferred from homology"/>
<sequence>MAKKIDAYIKLQVKSGSANPSPPVGPALGQKGVNIMEFCKAFNARTEKMEKGMPIPVVITVYSDRSFTFETKTSPASYLLKTAAGLKSGSPRPNTQKVGTIARAKVQEIAELKAADMTGADIEAMTRSIEGTARSMGLVVED</sequence>
<organism>
    <name type="scientific">Shewanella baltica (strain OS185)</name>
    <dbReference type="NCBI Taxonomy" id="402882"/>
    <lineage>
        <taxon>Bacteria</taxon>
        <taxon>Pseudomonadati</taxon>
        <taxon>Pseudomonadota</taxon>
        <taxon>Gammaproteobacteria</taxon>
        <taxon>Alteromonadales</taxon>
        <taxon>Shewanellaceae</taxon>
        <taxon>Shewanella</taxon>
    </lineage>
</organism>
<evidence type="ECO:0000255" key="1">
    <source>
        <dbReference type="HAMAP-Rule" id="MF_00736"/>
    </source>
</evidence>
<evidence type="ECO:0000305" key="2"/>
<accession>A6WHR7</accession>
<keyword id="KW-0488">Methylation</keyword>
<keyword id="KW-0687">Ribonucleoprotein</keyword>
<keyword id="KW-0689">Ribosomal protein</keyword>
<keyword id="KW-0694">RNA-binding</keyword>
<keyword id="KW-0699">rRNA-binding</keyword>
<reference key="1">
    <citation type="submission" date="2007-07" db="EMBL/GenBank/DDBJ databases">
        <title>Complete sequence of chromosome of Shewanella baltica OS185.</title>
        <authorList>
            <consortium name="US DOE Joint Genome Institute"/>
            <person name="Copeland A."/>
            <person name="Lucas S."/>
            <person name="Lapidus A."/>
            <person name="Barry K."/>
            <person name="Glavina del Rio T."/>
            <person name="Dalin E."/>
            <person name="Tice H."/>
            <person name="Pitluck S."/>
            <person name="Sims D."/>
            <person name="Brettin T."/>
            <person name="Bruce D."/>
            <person name="Detter J.C."/>
            <person name="Han C."/>
            <person name="Schmutz J."/>
            <person name="Larimer F."/>
            <person name="Land M."/>
            <person name="Hauser L."/>
            <person name="Kyrpides N."/>
            <person name="Mikhailova N."/>
            <person name="Brettar I."/>
            <person name="Rodrigues J."/>
            <person name="Konstantinidis K."/>
            <person name="Tiedje J."/>
            <person name="Richardson P."/>
        </authorList>
    </citation>
    <scope>NUCLEOTIDE SEQUENCE [LARGE SCALE GENOMIC DNA]</scope>
    <source>
        <strain>OS185</strain>
    </source>
</reference>
<protein>
    <recommendedName>
        <fullName evidence="1">Large ribosomal subunit protein uL11</fullName>
    </recommendedName>
    <alternativeName>
        <fullName evidence="2">50S ribosomal protein L11</fullName>
    </alternativeName>
</protein>
<comment type="function">
    <text evidence="1">Forms part of the ribosomal stalk which helps the ribosome interact with GTP-bound translation factors.</text>
</comment>
<comment type="subunit">
    <text evidence="1">Part of the ribosomal stalk of the 50S ribosomal subunit. Interacts with L10 and the large rRNA to form the base of the stalk. L10 forms an elongated spine to which L12 dimers bind in a sequential fashion forming a multimeric L10(L12)X complex.</text>
</comment>
<comment type="PTM">
    <text evidence="1">One or more lysine residues are methylated.</text>
</comment>
<comment type="similarity">
    <text evidence="1">Belongs to the universal ribosomal protein uL11 family.</text>
</comment>
<gene>
    <name evidence="1" type="primary">rplK</name>
    <name type="ordered locus">Shew185_0185</name>
</gene>
<name>RL11_SHEB8</name>
<dbReference type="EMBL" id="CP000753">
    <property type="protein sequence ID" value="ABS06356.1"/>
    <property type="molecule type" value="Genomic_DNA"/>
</dbReference>
<dbReference type="RefSeq" id="WP_006083611.1">
    <property type="nucleotide sequence ID" value="NC_009665.1"/>
</dbReference>
<dbReference type="SMR" id="A6WHR7"/>
<dbReference type="GeneID" id="11770549"/>
<dbReference type="KEGG" id="sbm:Shew185_0185"/>
<dbReference type="HOGENOM" id="CLU_074237_2_0_6"/>
<dbReference type="GO" id="GO:0022625">
    <property type="term" value="C:cytosolic large ribosomal subunit"/>
    <property type="evidence" value="ECO:0007669"/>
    <property type="project" value="TreeGrafter"/>
</dbReference>
<dbReference type="GO" id="GO:0070180">
    <property type="term" value="F:large ribosomal subunit rRNA binding"/>
    <property type="evidence" value="ECO:0007669"/>
    <property type="project" value="UniProtKB-UniRule"/>
</dbReference>
<dbReference type="GO" id="GO:0003735">
    <property type="term" value="F:structural constituent of ribosome"/>
    <property type="evidence" value="ECO:0007669"/>
    <property type="project" value="InterPro"/>
</dbReference>
<dbReference type="GO" id="GO:0006412">
    <property type="term" value="P:translation"/>
    <property type="evidence" value="ECO:0007669"/>
    <property type="project" value="UniProtKB-UniRule"/>
</dbReference>
<dbReference type="CDD" id="cd00349">
    <property type="entry name" value="Ribosomal_L11"/>
    <property type="match status" value="1"/>
</dbReference>
<dbReference type="FunFam" id="1.10.10.250:FF:000001">
    <property type="entry name" value="50S ribosomal protein L11"/>
    <property type="match status" value="1"/>
</dbReference>
<dbReference type="FunFam" id="3.30.1550.10:FF:000001">
    <property type="entry name" value="50S ribosomal protein L11"/>
    <property type="match status" value="1"/>
</dbReference>
<dbReference type="Gene3D" id="1.10.10.250">
    <property type="entry name" value="Ribosomal protein L11, C-terminal domain"/>
    <property type="match status" value="1"/>
</dbReference>
<dbReference type="Gene3D" id="3.30.1550.10">
    <property type="entry name" value="Ribosomal protein L11/L12, N-terminal domain"/>
    <property type="match status" value="1"/>
</dbReference>
<dbReference type="HAMAP" id="MF_00736">
    <property type="entry name" value="Ribosomal_uL11"/>
    <property type="match status" value="1"/>
</dbReference>
<dbReference type="InterPro" id="IPR000911">
    <property type="entry name" value="Ribosomal_uL11"/>
</dbReference>
<dbReference type="InterPro" id="IPR006519">
    <property type="entry name" value="Ribosomal_uL11_bac-typ"/>
</dbReference>
<dbReference type="InterPro" id="IPR020783">
    <property type="entry name" value="Ribosomal_uL11_C"/>
</dbReference>
<dbReference type="InterPro" id="IPR036769">
    <property type="entry name" value="Ribosomal_uL11_C_sf"/>
</dbReference>
<dbReference type="InterPro" id="IPR020785">
    <property type="entry name" value="Ribosomal_uL11_CS"/>
</dbReference>
<dbReference type="InterPro" id="IPR020784">
    <property type="entry name" value="Ribosomal_uL11_N"/>
</dbReference>
<dbReference type="InterPro" id="IPR036796">
    <property type="entry name" value="Ribosomal_uL11_N_sf"/>
</dbReference>
<dbReference type="NCBIfam" id="TIGR01632">
    <property type="entry name" value="L11_bact"/>
    <property type="match status" value="1"/>
</dbReference>
<dbReference type="PANTHER" id="PTHR11661">
    <property type="entry name" value="60S RIBOSOMAL PROTEIN L12"/>
    <property type="match status" value="1"/>
</dbReference>
<dbReference type="PANTHER" id="PTHR11661:SF1">
    <property type="entry name" value="LARGE RIBOSOMAL SUBUNIT PROTEIN UL11M"/>
    <property type="match status" value="1"/>
</dbReference>
<dbReference type="Pfam" id="PF00298">
    <property type="entry name" value="Ribosomal_L11"/>
    <property type="match status" value="1"/>
</dbReference>
<dbReference type="Pfam" id="PF03946">
    <property type="entry name" value="Ribosomal_L11_N"/>
    <property type="match status" value="1"/>
</dbReference>
<dbReference type="SMART" id="SM00649">
    <property type="entry name" value="RL11"/>
    <property type="match status" value="1"/>
</dbReference>
<dbReference type="SUPFAM" id="SSF54747">
    <property type="entry name" value="Ribosomal L11/L12e N-terminal domain"/>
    <property type="match status" value="1"/>
</dbReference>
<dbReference type="SUPFAM" id="SSF46906">
    <property type="entry name" value="Ribosomal protein L11, C-terminal domain"/>
    <property type="match status" value="1"/>
</dbReference>
<dbReference type="PROSITE" id="PS00359">
    <property type="entry name" value="RIBOSOMAL_L11"/>
    <property type="match status" value="1"/>
</dbReference>
<feature type="chain" id="PRO_1000046260" description="Large ribosomal subunit protein uL11">
    <location>
        <begin position="1"/>
        <end position="142"/>
    </location>
</feature>